<comment type="catalytic activity">
    <reaction evidence="1">
        <text>sn-glycerol 3-phosphate + an acyl-CoA = a 1-acyl-sn-glycero-3-phosphate + CoA</text>
        <dbReference type="Rhea" id="RHEA:15325"/>
        <dbReference type="ChEBI" id="CHEBI:57287"/>
        <dbReference type="ChEBI" id="CHEBI:57597"/>
        <dbReference type="ChEBI" id="CHEBI:57970"/>
        <dbReference type="ChEBI" id="CHEBI:58342"/>
        <dbReference type="EC" id="2.3.1.15"/>
    </reaction>
</comment>
<comment type="pathway">
    <text evidence="1">Phospholipid metabolism; CDP-diacylglycerol biosynthesis; CDP-diacylglycerol from sn-glycerol 3-phosphate: step 1/3.</text>
</comment>
<comment type="subcellular location">
    <subcellularLocation>
        <location evidence="1">Cell inner membrane</location>
        <topology evidence="1">Peripheral membrane protein</topology>
        <orientation evidence="1">Cytoplasmic side</orientation>
    </subcellularLocation>
</comment>
<comment type="domain">
    <text evidence="1">The HXXXXD motif is essential for acyltransferase activity and may constitute the binding site for the phosphate moiety of the glycerol-3-phosphate.</text>
</comment>
<comment type="similarity">
    <text evidence="1">Belongs to the GPAT/DAPAT family.</text>
</comment>
<gene>
    <name evidence="1" type="primary">plsB</name>
    <name type="ordered locus">Shew185_4177</name>
</gene>
<name>PLSB_SHEB8</name>
<protein>
    <recommendedName>
        <fullName evidence="1">Glycerol-3-phosphate acyltransferase</fullName>
        <shortName evidence="1">GPAT</shortName>
        <ecNumber evidence="1">2.3.1.15</ecNumber>
    </recommendedName>
</protein>
<organism>
    <name type="scientific">Shewanella baltica (strain OS185)</name>
    <dbReference type="NCBI Taxonomy" id="402882"/>
    <lineage>
        <taxon>Bacteria</taxon>
        <taxon>Pseudomonadati</taxon>
        <taxon>Pseudomonadota</taxon>
        <taxon>Gammaproteobacteria</taxon>
        <taxon>Alteromonadales</taxon>
        <taxon>Shewanellaceae</taxon>
        <taxon>Shewanella</taxon>
    </lineage>
</organism>
<feature type="chain" id="PRO_1000049455" description="Glycerol-3-phosphate acyltransferase">
    <location>
        <begin position="1"/>
        <end position="807"/>
    </location>
</feature>
<feature type="short sequence motif" description="HXXXXD motif">
    <location>
        <begin position="308"/>
        <end position="313"/>
    </location>
</feature>
<accession>A6WU04</accession>
<evidence type="ECO:0000255" key="1">
    <source>
        <dbReference type="HAMAP-Rule" id="MF_00393"/>
    </source>
</evidence>
<proteinExistence type="inferred from homology"/>
<keyword id="KW-0012">Acyltransferase</keyword>
<keyword id="KW-0997">Cell inner membrane</keyword>
<keyword id="KW-1003">Cell membrane</keyword>
<keyword id="KW-0444">Lipid biosynthesis</keyword>
<keyword id="KW-0443">Lipid metabolism</keyword>
<keyword id="KW-0472">Membrane</keyword>
<keyword id="KW-0594">Phospholipid biosynthesis</keyword>
<keyword id="KW-1208">Phospholipid metabolism</keyword>
<keyword id="KW-0808">Transferase</keyword>
<sequence length="807" mass="91246">MPKHDSLWLKSLRWIQKHLVHTIVVPQDPFADLNLDASRPLAYVMKTESLSDIAALSEITAKLGLPSPYEPLVANGVIAPRVVCLQGRKPLFGERAGNEPFLECFMRLLAVHKERPELDIQLVPVSLYWGRTPGKEDDTMKAAVFERENPTWLRKCLMILFLGRHNFVQFSNAVSLRYMADEHGTDMGIAHKLARVARVHFRRQRKVMTGPVLPNRQALFHSLLKSESLRKAIQEEAANKKISETQARETAIEYLDEIAADYSDSLVRIAERFLTWLWNKLYSGINIKGAEQVRQLHHDGHEIVYVPCHRSHMDYLLLSYILYYQGMVPPHIAAGINLNFWPAGPMFRRGGAFFIRRSFNGNKLYTAVFREYLDQLFAKGYSVEYFSEGGRSRTGRLLAPKTGMIAMTMNSVLRGIERPVTLVPVYLGYDHVMEVATYHKELSGKKKKKESVWQVFGAIRKLGNFGQGYVNFGEPITLQNFLNERAPNWRTELADDPEQKPSWLTPAVNVLANRVMTNINDAAAASSVTLTSLVLLATDQNALERSLLERQLDLYLTLLKKVPYTTYTSVAEGDGKHLVQQGLELNKFVVCADPLGEIVSIEASQAVSMTYYRNNIIHLFIVPSLIASCLTHNEQIPRQQVVSIVADFYPLLKAELFMGIKDVPAYVNQVLDFFIEQGLVVETDTLTVVPEHTSQLLLLASSVSETLQRYAIIFNLLANRPKMERSELESESHLLAQRLGALHGITAPEFYDKKLYGTLSVKLKELGYLADNQDKSNINRIRDQANSLLRPSVKQTIVASVTAEHTV</sequence>
<reference key="1">
    <citation type="submission" date="2007-07" db="EMBL/GenBank/DDBJ databases">
        <title>Complete sequence of chromosome of Shewanella baltica OS185.</title>
        <authorList>
            <consortium name="US DOE Joint Genome Institute"/>
            <person name="Copeland A."/>
            <person name="Lucas S."/>
            <person name="Lapidus A."/>
            <person name="Barry K."/>
            <person name="Glavina del Rio T."/>
            <person name="Dalin E."/>
            <person name="Tice H."/>
            <person name="Pitluck S."/>
            <person name="Sims D."/>
            <person name="Brettin T."/>
            <person name="Bruce D."/>
            <person name="Detter J.C."/>
            <person name="Han C."/>
            <person name="Schmutz J."/>
            <person name="Larimer F."/>
            <person name="Land M."/>
            <person name="Hauser L."/>
            <person name="Kyrpides N."/>
            <person name="Mikhailova N."/>
            <person name="Brettar I."/>
            <person name="Rodrigues J."/>
            <person name="Konstantinidis K."/>
            <person name="Tiedje J."/>
            <person name="Richardson P."/>
        </authorList>
    </citation>
    <scope>NUCLEOTIDE SEQUENCE [LARGE SCALE GENOMIC DNA]</scope>
    <source>
        <strain>OS185</strain>
    </source>
</reference>
<dbReference type="EC" id="2.3.1.15" evidence="1"/>
<dbReference type="EMBL" id="CP000753">
    <property type="protein sequence ID" value="ABS10293.1"/>
    <property type="molecule type" value="Genomic_DNA"/>
</dbReference>
<dbReference type="RefSeq" id="WP_006079610.1">
    <property type="nucleotide sequence ID" value="NC_009665.1"/>
</dbReference>
<dbReference type="SMR" id="A6WU04"/>
<dbReference type="GeneID" id="11774285"/>
<dbReference type="KEGG" id="sbm:Shew185_4177"/>
<dbReference type="HOGENOM" id="CLU_015407_0_0_6"/>
<dbReference type="UniPathway" id="UPA00557">
    <property type="reaction ID" value="UER00612"/>
</dbReference>
<dbReference type="GO" id="GO:0005886">
    <property type="term" value="C:plasma membrane"/>
    <property type="evidence" value="ECO:0007669"/>
    <property type="project" value="UniProtKB-SubCell"/>
</dbReference>
<dbReference type="GO" id="GO:0004366">
    <property type="term" value="F:glycerol-3-phosphate O-acyltransferase activity"/>
    <property type="evidence" value="ECO:0007669"/>
    <property type="project" value="UniProtKB-UniRule"/>
</dbReference>
<dbReference type="GO" id="GO:0016024">
    <property type="term" value="P:CDP-diacylglycerol biosynthetic process"/>
    <property type="evidence" value="ECO:0007669"/>
    <property type="project" value="UniProtKB-UniRule"/>
</dbReference>
<dbReference type="GO" id="GO:0006631">
    <property type="term" value="P:fatty acid metabolic process"/>
    <property type="evidence" value="ECO:0007669"/>
    <property type="project" value="TreeGrafter"/>
</dbReference>
<dbReference type="CDD" id="cd07993">
    <property type="entry name" value="LPLAT_DHAPAT-like"/>
    <property type="match status" value="1"/>
</dbReference>
<dbReference type="HAMAP" id="MF_00393">
    <property type="entry name" value="Glyc3P_acyltrans"/>
    <property type="match status" value="1"/>
</dbReference>
<dbReference type="InterPro" id="IPR022284">
    <property type="entry name" value="GPAT/DHAPAT"/>
</dbReference>
<dbReference type="InterPro" id="IPR045520">
    <property type="entry name" value="GPAT/DHAPAT_C"/>
</dbReference>
<dbReference type="InterPro" id="IPR041728">
    <property type="entry name" value="GPAT/DHAPAT_LPLAT"/>
</dbReference>
<dbReference type="InterPro" id="IPR028354">
    <property type="entry name" value="GPAT_PlsB"/>
</dbReference>
<dbReference type="InterPro" id="IPR002123">
    <property type="entry name" value="Plipid/glycerol_acylTrfase"/>
</dbReference>
<dbReference type="NCBIfam" id="TIGR03703">
    <property type="entry name" value="plsB"/>
    <property type="match status" value="1"/>
</dbReference>
<dbReference type="NCBIfam" id="NF003441">
    <property type="entry name" value="PRK04974.1"/>
    <property type="match status" value="1"/>
</dbReference>
<dbReference type="PANTHER" id="PTHR12563:SF17">
    <property type="entry name" value="DIHYDROXYACETONE PHOSPHATE ACYLTRANSFERASE"/>
    <property type="match status" value="1"/>
</dbReference>
<dbReference type="PANTHER" id="PTHR12563">
    <property type="entry name" value="GLYCEROL-3-PHOSPHATE ACYLTRANSFERASE"/>
    <property type="match status" value="1"/>
</dbReference>
<dbReference type="Pfam" id="PF01553">
    <property type="entry name" value="Acyltransferase"/>
    <property type="match status" value="1"/>
</dbReference>
<dbReference type="Pfam" id="PF19277">
    <property type="entry name" value="GPAT_C"/>
    <property type="match status" value="1"/>
</dbReference>
<dbReference type="PIRSF" id="PIRSF500064">
    <property type="entry name" value="GPAT"/>
    <property type="match status" value="1"/>
</dbReference>
<dbReference type="PIRSF" id="PIRSF000437">
    <property type="entry name" value="GPAT_DHAPAT"/>
    <property type="match status" value="1"/>
</dbReference>
<dbReference type="SMART" id="SM00563">
    <property type="entry name" value="PlsC"/>
    <property type="match status" value="1"/>
</dbReference>
<dbReference type="SUPFAM" id="SSF69593">
    <property type="entry name" value="Glycerol-3-phosphate (1)-acyltransferase"/>
    <property type="match status" value="1"/>
</dbReference>